<accession>C3KBV5</accession>
<name>SELO_PSEFS</name>
<comment type="function">
    <text evidence="1">Nucleotidyltransferase involved in the post-translational modification of proteins. It can catalyze the addition of adenosine monophosphate (AMP) or uridine monophosphate (UMP) to a protein, resulting in modifications known as AMPylation and UMPylation.</text>
</comment>
<comment type="catalytic activity">
    <reaction evidence="1">
        <text>L-seryl-[protein] + ATP = 3-O-(5'-adenylyl)-L-seryl-[protein] + diphosphate</text>
        <dbReference type="Rhea" id="RHEA:58120"/>
        <dbReference type="Rhea" id="RHEA-COMP:9863"/>
        <dbReference type="Rhea" id="RHEA-COMP:15073"/>
        <dbReference type="ChEBI" id="CHEBI:29999"/>
        <dbReference type="ChEBI" id="CHEBI:30616"/>
        <dbReference type="ChEBI" id="CHEBI:33019"/>
        <dbReference type="ChEBI" id="CHEBI:142516"/>
        <dbReference type="EC" id="2.7.7.108"/>
    </reaction>
</comment>
<comment type="catalytic activity">
    <reaction evidence="1">
        <text>L-threonyl-[protein] + ATP = 3-O-(5'-adenylyl)-L-threonyl-[protein] + diphosphate</text>
        <dbReference type="Rhea" id="RHEA:54292"/>
        <dbReference type="Rhea" id="RHEA-COMP:11060"/>
        <dbReference type="Rhea" id="RHEA-COMP:13847"/>
        <dbReference type="ChEBI" id="CHEBI:30013"/>
        <dbReference type="ChEBI" id="CHEBI:30616"/>
        <dbReference type="ChEBI" id="CHEBI:33019"/>
        <dbReference type="ChEBI" id="CHEBI:138113"/>
        <dbReference type="EC" id="2.7.7.108"/>
    </reaction>
</comment>
<comment type="catalytic activity">
    <reaction evidence="1">
        <text>L-tyrosyl-[protein] + ATP = O-(5'-adenylyl)-L-tyrosyl-[protein] + diphosphate</text>
        <dbReference type="Rhea" id="RHEA:54288"/>
        <dbReference type="Rhea" id="RHEA-COMP:10136"/>
        <dbReference type="Rhea" id="RHEA-COMP:13846"/>
        <dbReference type="ChEBI" id="CHEBI:30616"/>
        <dbReference type="ChEBI" id="CHEBI:33019"/>
        <dbReference type="ChEBI" id="CHEBI:46858"/>
        <dbReference type="ChEBI" id="CHEBI:83624"/>
        <dbReference type="EC" id="2.7.7.108"/>
    </reaction>
</comment>
<comment type="catalytic activity">
    <reaction evidence="1">
        <text>L-histidyl-[protein] + UTP = N(tele)-(5'-uridylyl)-L-histidyl-[protein] + diphosphate</text>
        <dbReference type="Rhea" id="RHEA:83891"/>
        <dbReference type="Rhea" id="RHEA-COMP:9745"/>
        <dbReference type="Rhea" id="RHEA-COMP:20239"/>
        <dbReference type="ChEBI" id="CHEBI:29979"/>
        <dbReference type="ChEBI" id="CHEBI:33019"/>
        <dbReference type="ChEBI" id="CHEBI:46398"/>
        <dbReference type="ChEBI" id="CHEBI:233474"/>
    </reaction>
</comment>
<comment type="catalytic activity">
    <reaction evidence="1">
        <text>L-seryl-[protein] + UTP = O-(5'-uridylyl)-L-seryl-[protein] + diphosphate</text>
        <dbReference type="Rhea" id="RHEA:64604"/>
        <dbReference type="Rhea" id="RHEA-COMP:9863"/>
        <dbReference type="Rhea" id="RHEA-COMP:16635"/>
        <dbReference type="ChEBI" id="CHEBI:29999"/>
        <dbReference type="ChEBI" id="CHEBI:33019"/>
        <dbReference type="ChEBI" id="CHEBI:46398"/>
        <dbReference type="ChEBI" id="CHEBI:156051"/>
    </reaction>
</comment>
<comment type="catalytic activity">
    <reaction evidence="1">
        <text>L-tyrosyl-[protein] + UTP = O-(5'-uridylyl)-L-tyrosyl-[protein] + diphosphate</text>
        <dbReference type="Rhea" id="RHEA:83887"/>
        <dbReference type="Rhea" id="RHEA-COMP:10136"/>
        <dbReference type="Rhea" id="RHEA-COMP:20238"/>
        <dbReference type="ChEBI" id="CHEBI:33019"/>
        <dbReference type="ChEBI" id="CHEBI:46398"/>
        <dbReference type="ChEBI" id="CHEBI:46858"/>
        <dbReference type="ChEBI" id="CHEBI:90602"/>
    </reaction>
</comment>
<comment type="cofactor">
    <cofactor evidence="1">
        <name>Mg(2+)</name>
        <dbReference type="ChEBI" id="CHEBI:18420"/>
    </cofactor>
    <cofactor evidence="1">
        <name>Mn(2+)</name>
        <dbReference type="ChEBI" id="CHEBI:29035"/>
    </cofactor>
</comment>
<comment type="similarity">
    <text evidence="1">Belongs to the SELO family.</text>
</comment>
<evidence type="ECO:0000255" key="1">
    <source>
        <dbReference type="HAMAP-Rule" id="MF_00692"/>
    </source>
</evidence>
<sequence>MKALDELTFDNRFARLGDAFSTHVLPEPLDAPRLVVASPAAMALLDLDPSVAETPVFAELFGGHKLWAEAEPRAMVYSGHQFGGYTPQLGDGRGLLLGEVYNEAGEHWDLHLKGAGMTPYSRMGDGRAVLRSSIREFLASEALHALGIPSSRALCVIGSDTPVWREKQERGAMVLRMAHSHIRFGHFEYFYYTKKPEQQAELAEHVLNLHYPECREQPEPYLAMFREIVERNAELIAKWQAYGFCHGVMNTDNMSILGITFDFGPFAFLDDFDAHFICNHSDHEGRYSFSNQVPIGQWNLSALAQALTPFIGVDALKEALGLYLPLYQANYLDLMRRRLGLTTAEDDDQKLVERLLKLMQSSGVDYTLFFRRLGDEPAALAVTRLRDDFVDLAGFDAWAEQYKARVERDGDNSEEQRRARMHAVNPLYILRNYLAQNAIAAAESGDYSEVRRLHEVLSKPFEEQAGMEQYAQRPPDWGKHLEISCSS</sequence>
<dbReference type="EC" id="2.7.7.-" evidence="1"/>
<dbReference type="EC" id="2.7.7.108" evidence="1"/>
<dbReference type="EMBL" id="AM181176">
    <property type="protein sequence ID" value="CAY46720.1"/>
    <property type="molecule type" value="Genomic_DNA"/>
</dbReference>
<dbReference type="RefSeq" id="WP_012721845.1">
    <property type="nucleotide sequence ID" value="NC_012660.1"/>
</dbReference>
<dbReference type="SMR" id="C3KBV5"/>
<dbReference type="STRING" id="294.SRM1_00498"/>
<dbReference type="PATRIC" id="fig|216595.4.peg.681"/>
<dbReference type="eggNOG" id="COG0397">
    <property type="taxonomic scope" value="Bacteria"/>
</dbReference>
<dbReference type="HOGENOM" id="CLU_010245_4_1_6"/>
<dbReference type="OrthoDB" id="9776281at2"/>
<dbReference type="GO" id="GO:0070733">
    <property type="term" value="F:AMPylase activity"/>
    <property type="evidence" value="ECO:0007669"/>
    <property type="project" value="TreeGrafter"/>
</dbReference>
<dbReference type="GO" id="GO:0005524">
    <property type="term" value="F:ATP binding"/>
    <property type="evidence" value="ECO:0007669"/>
    <property type="project" value="UniProtKB-UniRule"/>
</dbReference>
<dbReference type="GO" id="GO:0000287">
    <property type="term" value="F:magnesium ion binding"/>
    <property type="evidence" value="ECO:0007669"/>
    <property type="project" value="UniProtKB-UniRule"/>
</dbReference>
<dbReference type="HAMAP" id="MF_00692">
    <property type="entry name" value="YdiU_SelO"/>
    <property type="match status" value="1"/>
</dbReference>
<dbReference type="InterPro" id="IPR003846">
    <property type="entry name" value="SelO"/>
</dbReference>
<dbReference type="NCBIfam" id="NF000658">
    <property type="entry name" value="PRK00029.1"/>
    <property type="match status" value="1"/>
</dbReference>
<dbReference type="NCBIfam" id="NF045949">
    <property type="entry name" value="PrtAdtaseSelOPseudom"/>
    <property type="match status" value="1"/>
</dbReference>
<dbReference type="PANTHER" id="PTHR32057">
    <property type="entry name" value="PROTEIN ADENYLYLTRANSFERASE SELO, MITOCHONDRIAL"/>
    <property type="match status" value="1"/>
</dbReference>
<dbReference type="PANTHER" id="PTHR32057:SF14">
    <property type="entry name" value="PROTEIN ADENYLYLTRANSFERASE SELO, MITOCHONDRIAL"/>
    <property type="match status" value="1"/>
</dbReference>
<dbReference type="Pfam" id="PF02696">
    <property type="entry name" value="SelO"/>
    <property type="match status" value="1"/>
</dbReference>
<feature type="chain" id="PRO_1000212596" description="Protein nucleotidyltransferase YdiU">
    <location>
        <begin position="1"/>
        <end position="487"/>
    </location>
</feature>
<feature type="active site" description="Proton acceptor" evidence="1">
    <location>
        <position position="252"/>
    </location>
</feature>
<feature type="binding site" evidence="1">
    <location>
        <position position="90"/>
    </location>
    <ligand>
        <name>ATP</name>
        <dbReference type="ChEBI" id="CHEBI:30616"/>
    </ligand>
</feature>
<feature type="binding site" evidence="1">
    <location>
        <position position="92"/>
    </location>
    <ligand>
        <name>ATP</name>
        <dbReference type="ChEBI" id="CHEBI:30616"/>
    </ligand>
</feature>
<feature type="binding site" evidence="1">
    <location>
        <position position="93"/>
    </location>
    <ligand>
        <name>ATP</name>
        <dbReference type="ChEBI" id="CHEBI:30616"/>
    </ligand>
</feature>
<feature type="binding site" evidence="1">
    <location>
        <position position="113"/>
    </location>
    <ligand>
        <name>ATP</name>
        <dbReference type="ChEBI" id="CHEBI:30616"/>
    </ligand>
</feature>
<feature type="binding site" evidence="1">
    <location>
        <position position="125"/>
    </location>
    <ligand>
        <name>ATP</name>
        <dbReference type="ChEBI" id="CHEBI:30616"/>
    </ligand>
</feature>
<feature type="binding site" evidence="1">
    <location>
        <position position="126"/>
    </location>
    <ligand>
        <name>ATP</name>
        <dbReference type="ChEBI" id="CHEBI:30616"/>
    </ligand>
</feature>
<feature type="binding site" evidence="1">
    <location>
        <position position="176"/>
    </location>
    <ligand>
        <name>ATP</name>
        <dbReference type="ChEBI" id="CHEBI:30616"/>
    </ligand>
</feature>
<feature type="binding site" evidence="1">
    <location>
        <position position="183"/>
    </location>
    <ligand>
        <name>ATP</name>
        <dbReference type="ChEBI" id="CHEBI:30616"/>
    </ligand>
</feature>
<feature type="binding site" evidence="1">
    <location>
        <position position="253"/>
    </location>
    <ligand>
        <name>Mg(2+)</name>
        <dbReference type="ChEBI" id="CHEBI:18420"/>
    </ligand>
</feature>
<feature type="binding site" evidence="1">
    <location>
        <position position="262"/>
    </location>
    <ligand>
        <name>ATP</name>
        <dbReference type="ChEBI" id="CHEBI:30616"/>
    </ligand>
</feature>
<feature type="binding site" evidence="1">
    <location>
        <position position="262"/>
    </location>
    <ligand>
        <name>Mg(2+)</name>
        <dbReference type="ChEBI" id="CHEBI:18420"/>
    </ligand>
</feature>
<proteinExistence type="inferred from homology"/>
<organism>
    <name type="scientific">Pseudomonas fluorescens (strain SBW25)</name>
    <dbReference type="NCBI Taxonomy" id="216595"/>
    <lineage>
        <taxon>Bacteria</taxon>
        <taxon>Pseudomonadati</taxon>
        <taxon>Pseudomonadota</taxon>
        <taxon>Gammaproteobacteria</taxon>
        <taxon>Pseudomonadales</taxon>
        <taxon>Pseudomonadaceae</taxon>
        <taxon>Pseudomonas</taxon>
    </lineage>
</organism>
<protein>
    <recommendedName>
        <fullName evidence="1">Protein nucleotidyltransferase YdiU</fullName>
        <ecNumber evidence="1">2.7.7.-</ecNumber>
    </recommendedName>
    <alternativeName>
        <fullName evidence="1">Protein adenylyltransferase YdiU</fullName>
        <ecNumber evidence="1">2.7.7.108</ecNumber>
    </alternativeName>
    <alternativeName>
        <fullName evidence="1">Protein uridylyltransferase YdiU</fullName>
        <ecNumber evidence="1">2.7.7.-</ecNumber>
    </alternativeName>
</protein>
<keyword id="KW-0067">ATP-binding</keyword>
<keyword id="KW-0460">Magnesium</keyword>
<keyword id="KW-0464">Manganese</keyword>
<keyword id="KW-0479">Metal-binding</keyword>
<keyword id="KW-0547">Nucleotide-binding</keyword>
<keyword id="KW-0548">Nucleotidyltransferase</keyword>
<keyword id="KW-0808">Transferase</keyword>
<gene>
    <name evidence="1" type="primary">ydiU</name>
    <name evidence="1" type="synonym">selO</name>
    <name type="ordered locus">PFLU_0444</name>
</gene>
<reference key="1">
    <citation type="journal article" date="2009" name="Genome Biol.">
        <title>Genomic and genetic analyses of diversity and plant interactions of Pseudomonas fluorescens.</title>
        <authorList>
            <person name="Silby M.W."/>
            <person name="Cerdeno-Tarraga A.M."/>
            <person name="Vernikos G.S."/>
            <person name="Giddens S.R."/>
            <person name="Jackson R.W."/>
            <person name="Preston G.M."/>
            <person name="Zhang X.-X."/>
            <person name="Moon C.D."/>
            <person name="Gehrig S.M."/>
            <person name="Godfrey S.A.C."/>
            <person name="Knight C.G."/>
            <person name="Malone J.G."/>
            <person name="Robinson Z."/>
            <person name="Spiers A.J."/>
            <person name="Harris S."/>
            <person name="Challis G.L."/>
            <person name="Yaxley A.M."/>
            <person name="Harris D."/>
            <person name="Seeger K."/>
            <person name="Murphy L."/>
            <person name="Rutter S."/>
            <person name="Squares R."/>
            <person name="Quail M.A."/>
            <person name="Saunders E."/>
            <person name="Mavromatis K."/>
            <person name="Brettin T.S."/>
            <person name="Bentley S.D."/>
            <person name="Hothersall J."/>
            <person name="Stephens E."/>
            <person name="Thomas C.M."/>
            <person name="Parkhill J."/>
            <person name="Levy S.B."/>
            <person name="Rainey P.B."/>
            <person name="Thomson N.R."/>
        </authorList>
    </citation>
    <scope>NUCLEOTIDE SEQUENCE [LARGE SCALE GENOMIC DNA]</scope>
    <source>
        <strain>SBW25</strain>
    </source>
</reference>